<gene>
    <name type="ordered locus">YBR056W</name>
    <name type="ORF">YBR0510</name>
</gene>
<protein>
    <recommendedName>
        <fullName>Uncharacterized glycosyl hydrolase YBR056W</fullName>
        <ecNumber>3.2.1.-</ecNumber>
    </recommendedName>
</protein>
<name>YBQ6_YEAST</name>
<comment type="interaction">
    <interactant intactId="EBI-21453">
        <id>P38081</id>
    </interactant>
    <interactant intactId="EBI-16219">
        <id>P39940</id>
        <label>RSP5</label>
    </interactant>
    <organismsDiffer>false</organismsDiffer>
    <experiments>3</experiments>
</comment>
<comment type="subcellular location">
    <subcellularLocation>
        <location evidence="3">Mitochondrion intermembrane space</location>
    </subcellularLocation>
</comment>
<comment type="miscellaneous">
    <text evidence="2">Present with 1960 molecules/cell in log phase SD medium.</text>
</comment>
<comment type="similarity">
    <text evidence="4">Belongs to the glycosyl hydrolase 5 (cellulase A) family.</text>
</comment>
<reference key="1">
    <citation type="journal article" date="1995" name="Yeast">
        <title>Sequence and analysis of 24 kb on chromosome II of Saccharomyces cerevisiae.</title>
        <authorList>
            <person name="Aljinovic G."/>
            <person name="Pohl T.M."/>
        </authorList>
    </citation>
    <scope>NUCLEOTIDE SEQUENCE [GENOMIC DNA]</scope>
    <source>
        <strain>ATCC 204508 / S288c</strain>
    </source>
</reference>
<reference key="2">
    <citation type="journal article" date="1994" name="EMBO J.">
        <title>Complete DNA sequence of yeast chromosome II.</title>
        <authorList>
            <person name="Feldmann H."/>
            <person name="Aigle M."/>
            <person name="Aljinovic G."/>
            <person name="Andre B."/>
            <person name="Baclet M.C."/>
            <person name="Barthe C."/>
            <person name="Baur A."/>
            <person name="Becam A.-M."/>
            <person name="Biteau N."/>
            <person name="Boles E."/>
            <person name="Brandt T."/>
            <person name="Brendel M."/>
            <person name="Brueckner M."/>
            <person name="Bussereau F."/>
            <person name="Christiansen C."/>
            <person name="Contreras R."/>
            <person name="Crouzet M."/>
            <person name="Cziepluch C."/>
            <person name="Demolis N."/>
            <person name="Delaveau T."/>
            <person name="Doignon F."/>
            <person name="Domdey H."/>
            <person name="Duesterhus S."/>
            <person name="Dubois E."/>
            <person name="Dujon B."/>
            <person name="El Bakkoury M."/>
            <person name="Entian K.-D."/>
            <person name="Feuermann M."/>
            <person name="Fiers W."/>
            <person name="Fobo G.M."/>
            <person name="Fritz C."/>
            <person name="Gassenhuber J."/>
            <person name="Glansdorff N."/>
            <person name="Goffeau A."/>
            <person name="Grivell L.A."/>
            <person name="de Haan M."/>
            <person name="Hein C."/>
            <person name="Herbert C.J."/>
            <person name="Hollenberg C.P."/>
            <person name="Holmstroem K."/>
            <person name="Jacq C."/>
            <person name="Jacquet M."/>
            <person name="Jauniaux J.-C."/>
            <person name="Jonniaux J.-L."/>
            <person name="Kallesoee T."/>
            <person name="Kiesau P."/>
            <person name="Kirchrath L."/>
            <person name="Koetter P."/>
            <person name="Korol S."/>
            <person name="Liebl S."/>
            <person name="Logghe M."/>
            <person name="Lohan A.J.E."/>
            <person name="Louis E.J."/>
            <person name="Li Z.Y."/>
            <person name="Maat M.J."/>
            <person name="Mallet L."/>
            <person name="Mannhaupt G."/>
            <person name="Messenguy F."/>
            <person name="Miosga T."/>
            <person name="Molemans F."/>
            <person name="Mueller S."/>
            <person name="Nasr F."/>
            <person name="Obermaier B."/>
            <person name="Perea J."/>
            <person name="Pierard A."/>
            <person name="Piravandi E."/>
            <person name="Pohl F.M."/>
            <person name="Pohl T.M."/>
            <person name="Potier S."/>
            <person name="Proft M."/>
            <person name="Purnelle B."/>
            <person name="Ramezani Rad M."/>
            <person name="Rieger M."/>
            <person name="Rose M."/>
            <person name="Schaaff-Gerstenschlaeger I."/>
            <person name="Scherens B."/>
            <person name="Schwarzlose C."/>
            <person name="Skala J."/>
            <person name="Slonimski P.P."/>
            <person name="Smits P.H.M."/>
            <person name="Souciet J.-L."/>
            <person name="Steensma H.Y."/>
            <person name="Stucka R."/>
            <person name="Urrestarazu L.A."/>
            <person name="van der Aart Q.J.M."/>
            <person name="Van Dyck L."/>
            <person name="Vassarotti A."/>
            <person name="Vetter I."/>
            <person name="Vierendeels F."/>
            <person name="Vissers S."/>
            <person name="Wagner G."/>
            <person name="de Wergifosse P."/>
            <person name="Wolfe K.H."/>
            <person name="Zagulski M."/>
            <person name="Zimmermann F.K."/>
            <person name="Mewes H.-W."/>
            <person name="Kleine K."/>
        </authorList>
    </citation>
    <scope>NUCLEOTIDE SEQUENCE [LARGE SCALE GENOMIC DNA]</scope>
    <source>
        <strain>ATCC 204508 / S288c</strain>
    </source>
</reference>
<reference key="3">
    <citation type="journal article" date="2014" name="G3 (Bethesda)">
        <title>The reference genome sequence of Saccharomyces cerevisiae: Then and now.</title>
        <authorList>
            <person name="Engel S.R."/>
            <person name="Dietrich F.S."/>
            <person name="Fisk D.G."/>
            <person name="Binkley G."/>
            <person name="Balakrishnan R."/>
            <person name="Costanzo M.C."/>
            <person name="Dwight S.S."/>
            <person name="Hitz B.C."/>
            <person name="Karra K."/>
            <person name="Nash R.S."/>
            <person name="Weng S."/>
            <person name="Wong E.D."/>
            <person name="Lloyd P."/>
            <person name="Skrzypek M.S."/>
            <person name="Miyasato S.R."/>
            <person name="Simison M."/>
            <person name="Cherry J.M."/>
        </authorList>
    </citation>
    <scope>GENOME REANNOTATION</scope>
    <source>
        <strain>ATCC 204508 / S288c</strain>
    </source>
</reference>
<reference key="4">
    <citation type="journal article" date="2003" name="Nature">
        <title>Global analysis of protein expression in yeast.</title>
        <authorList>
            <person name="Ghaemmaghami S."/>
            <person name="Huh W.-K."/>
            <person name="Bower K."/>
            <person name="Howson R.W."/>
            <person name="Belle A."/>
            <person name="Dephoure N."/>
            <person name="O'Shea E.K."/>
            <person name="Weissman J.S."/>
        </authorList>
    </citation>
    <scope>LEVEL OF PROTEIN EXPRESSION [LARGE SCALE ANALYSIS]</scope>
</reference>
<reference key="5">
    <citation type="journal article" date="2012" name="Mol. Cell. Proteomics">
        <title>Intermembrane space proteome of yeast mitochondria.</title>
        <authorList>
            <person name="Voegtle F.N."/>
            <person name="Burkhart J.M."/>
            <person name="Rao S."/>
            <person name="Gerbeth C."/>
            <person name="Hinrichs J."/>
            <person name="Martinou J.C."/>
            <person name="Chacinska A."/>
            <person name="Sickmann A."/>
            <person name="Zahedi R.P."/>
            <person name="Meisinger C."/>
        </authorList>
    </citation>
    <scope>IDENTIFICATION BY MASS SPECTROMETRY</scope>
    <scope>SUBCELLULAR LOCATION [LARGE SCALE ANALYSIS]</scope>
</reference>
<keyword id="KW-0326">Glycosidase</keyword>
<keyword id="KW-0378">Hydrolase</keyword>
<keyword id="KW-0496">Mitochondrion</keyword>
<keyword id="KW-1185">Reference proteome</keyword>
<evidence type="ECO:0000250" key="1"/>
<evidence type="ECO:0000269" key="2">
    <source>
    </source>
</evidence>
<evidence type="ECO:0000269" key="3">
    <source>
    </source>
</evidence>
<evidence type="ECO:0000305" key="4"/>
<sequence length="501" mass="57822">MIGSLRNKFEHFKVSEKGGQNLSTTLPKLPPAKDLDRSTIYKYRYNYGVNLGALFVLEPWIFSKETICTIDGKEYDSEFDAISQQLKKHSSEDVAKMLSDHYKKYIDRIDWEWLSKDAHITALRIPIGYWHVEDGKHLDSLPFAPLRKVYELAKPWEKLGELINNAKKMSIGVLIDLHGLPGGANCDSHSGSKSGEAAFFHKEKYMTKVYKDILPAIINTMTLGNENIIGIQVVNEACFDNNPKGQKFYYSEAINTVEKLQPGLPVIISDGWWPQQWADWVKEKHFSEIVVIDSHVYRCFSDSDKSKDANSIIKDLPNTVNFPHEDADYTVGEFSGVLDGQTWNKTSGDRDAIVQKYVQTQADVFSHVASWGWFFWTLQFEYGDGGEWGLAPMMQKGNLPKRPHGDDLQVDKKKIDSIIHEHEAYWNGKGKNFEHWRFEDGIKTAVDDIIAFRKFDNSLIGRWHSWKSQRRAEYVSAKKDSEFMWEWDQGYQRGLDEFNKY</sequence>
<accession>P38081</accession>
<accession>D6VQ55</accession>
<dbReference type="EC" id="3.2.1.-"/>
<dbReference type="EMBL" id="Z35925">
    <property type="protein sequence ID" value="CAA84999.1"/>
    <property type="molecule type" value="Genomic_DNA"/>
</dbReference>
<dbReference type="EMBL" id="Z46260">
    <property type="protein sequence ID" value="CAA86399.1"/>
    <property type="molecule type" value="Genomic_DNA"/>
</dbReference>
<dbReference type="EMBL" id="BK006936">
    <property type="protein sequence ID" value="DAA07175.1"/>
    <property type="molecule type" value="Genomic_DNA"/>
</dbReference>
<dbReference type="PIR" id="S45914">
    <property type="entry name" value="S45914"/>
</dbReference>
<dbReference type="SMR" id="P38081"/>
<dbReference type="BioGRID" id="32758">
    <property type="interactions" value="129"/>
</dbReference>
<dbReference type="DIP" id="DIP-5444N"/>
<dbReference type="FunCoup" id="P38081">
    <property type="interactions" value="62"/>
</dbReference>
<dbReference type="IntAct" id="P38081">
    <property type="interactions" value="11"/>
</dbReference>
<dbReference type="MINT" id="P38081"/>
<dbReference type="STRING" id="4932.YBR056W"/>
<dbReference type="CAZy" id="GH5">
    <property type="family name" value="Glycoside Hydrolase Family 5"/>
</dbReference>
<dbReference type="iPTMnet" id="P38081"/>
<dbReference type="PaxDb" id="4932-YBR056W"/>
<dbReference type="PeptideAtlas" id="P38081"/>
<dbReference type="EnsemblFungi" id="YBR056W_mRNA">
    <property type="protein sequence ID" value="YBR056W"/>
    <property type="gene ID" value="YBR056W"/>
</dbReference>
<dbReference type="KEGG" id="sce:YBR056W"/>
<dbReference type="AGR" id="SGD:S000000260"/>
<dbReference type="SGD" id="S000000260">
    <property type="gene designation" value="YBR056W"/>
</dbReference>
<dbReference type="VEuPathDB" id="FungiDB:YBR056W"/>
<dbReference type="eggNOG" id="ENOG502QVVM">
    <property type="taxonomic scope" value="Eukaryota"/>
</dbReference>
<dbReference type="GeneTree" id="ENSGT00940000176313"/>
<dbReference type="HOGENOM" id="CLU_004624_8_2_1"/>
<dbReference type="InParanoid" id="P38081"/>
<dbReference type="OMA" id="GWFFWTL"/>
<dbReference type="OrthoDB" id="1887033at2759"/>
<dbReference type="BioCyc" id="YEAST:G3O-29027-MONOMER"/>
<dbReference type="BioGRID-ORCS" id="852346">
    <property type="hits" value="2 hits in 10 CRISPR screens"/>
</dbReference>
<dbReference type="PRO" id="PR:P38081"/>
<dbReference type="Proteomes" id="UP000002311">
    <property type="component" value="Chromosome II"/>
</dbReference>
<dbReference type="RNAct" id="P38081">
    <property type="molecule type" value="protein"/>
</dbReference>
<dbReference type="GO" id="GO:0005737">
    <property type="term" value="C:cytoplasm"/>
    <property type="evidence" value="ECO:0007005"/>
    <property type="project" value="SGD"/>
</dbReference>
<dbReference type="GO" id="GO:0005829">
    <property type="term" value="C:cytosol"/>
    <property type="evidence" value="ECO:0007005"/>
    <property type="project" value="SGD"/>
</dbReference>
<dbReference type="GO" id="GO:0005758">
    <property type="term" value="C:mitochondrial intermembrane space"/>
    <property type="evidence" value="ECO:0000314"/>
    <property type="project" value="SGD"/>
</dbReference>
<dbReference type="GO" id="GO:0046557">
    <property type="term" value="F:glucan endo-1,6-beta-glucosidase activity"/>
    <property type="evidence" value="ECO:0000318"/>
    <property type="project" value="GO_Central"/>
</dbReference>
<dbReference type="GO" id="GO:0004338">
    <property type="term" value="F:glucan exo-1,3-beta-glucosidase activity"/>
    <property type="evidence" value="ECO:0000318"/>
    <property type="project" value="GO_Central"/>
</dbReference>
<dbReference type="GO" id="GO:0009251">
    <property type="term" value="P:glucan catabolic process"/>
    <property type="evidence" value="ECO:0000318"/>
    <property type="project" value="GO_Central"/>
</dbReference>
<dbReference type="FunFam" id="3.20.20.80:FF:000100">
    <property type="entry name" value="Glycoside hydrolase superfamily"/>
    <property type="match status" value="1"/>
</dbReference>
<dbReference type="Gene3D" id="3.20.20.80">
    <property type="entry name" value="Glycosidases"/>
    <property type="match status" value="1"/>
</dbReference>
<dbReference type="InterPro" id="IPR017853">
    <property type="entry name" value="Glycoside_hydrolase_SF"/>
</dbReference>
<dbReference type="InterPro" id="IPR050386">
    <property type="entry name" value="Glycosyl_hydrolase_5"/>
</dbReference>
<dbReference type="PANTHER" id="PTHR31297:SF43">
    <property type="entry name" value="GLUCAN 1,3-BETA-GLUCOSIDASE 3"/>
    <property type="match status" value="1"/>
</dbReference>
<dbReference type="PANTHER" id="PTHR31297">
    <property type="entry name" value="GLUCAN ENDO-1,6-BETA-GLUCOSIDASE B"/>
    <property type="match status" value="1"/>
</dbReference>
<dbReference type="SUPFAM" id="SSF51445">
    <property type="entry name" value="(Trans)glycosidases"/>
    <property type="match status" value="1"/>
</dbReference>
<organism>
    <name type="scientific">Saccharomyces cerevisiae (strain ATCC 204508 / S288c)</name>
    <name type="common">Baker's yeast</name>
    <dbReference type="NCBI Taxonomy" id="559292"/>
    <lineage>
        <taxon>Eukaryota</taxon>
        <taxon>Fungi</taxon>
        <taxon>Dikarya</taxon>
        <taxon>Ascomycota</taxon>
        <taxon>Saccharomycotina</taxon>
        <taxon>Saccharomycetes</taxon>
        <taxon>Saccharomycetales</taxon>
        <taxon>Saccharomycetaceae</taxon>
        <taxon>Saccharomyces</taxon>
    </lineage>
</organism>
<proteinExistence type="evidence at protein level"/>
<feature type="chain" id="PRO_0000184055" description="Uncharacterized glycosyl hydrolase YBR056W">
    <location>
        <begin position="1"/>
        <end position="501"/>
    </location>
</feature>
<feature type="active site" description="Proton donor" evidence="1">
    <location>
        <position position="236"/>
    </location>
</feature>
<feature type="active site" description="Nucleophile" evidence="1">
    <location>
        <position position="333"/>
    </location>
</feature>